<feature type="signal peptide" evidence="1">
    <location>
        <begin position="1"/>
        <end position="23"/>
    </location>
</feature>
<feature type="chain" id="PRO_0000004855" description="Cecropin-C">
    <location>
        <begin position="24"/>
        <end position="62"/>
    </location>
</feature>
<feature type="modified residue" description="Arginine amide" evidence="1">
    <location>
        <position position="62"/>
    </location>
</feature>
<keyword id="KW-0027">Amidation</keyword>
<keyword id="KW-0044">Antibiotic</keyword>
<keyword id="KW-0929">Antimicrobial</keyword>
<keyword id="KW-0391">Immunity</keyword>
<keyword id="KW-0399">Innate immunity</keyword>
<keyword id="KW-0964">Secreted</keyword>
<keyword id="KW-0732">Signal</keyword>
<dbReference type="EMBL" id="AB047059">
    <property type="protein sequence ID" value="BAB78564.1"/>
    <property type="molecule type" value="Genomic_DNA"/>
</dbReference>
<dbReference type="SMR" id="P84226"/>
<dbReference type="eggNOG" id="ENOG502TCNK">
    <property type="taxonomic scope" value="Eukaryota"/>
</dbReference>
<dbReference type="OrthoDB" id="7410372at2759"/>
<dbReference type="ChiTaRS" id="CecC">
    <property type="organism name" value="fly"/>
</dbReference>
<dbReference type="GO" id="GO:0005615">
    <property type="term" value="C:extracellular space"/>
    <property type="evidence" value="ECO:0007669"/>
    <property type="project" value="TreeGrafter"/>
</dbReference>
<dbReference type="GO" id="GO:0019731">
    <property type="term" value="P:antibacterial humoral response"/>
    <property type="evidence" value="ECO:0007669"/>
    <property type="project" value="InterPro"/>
</dbReference>
<dbReference type="GO" id="GO:0050829">
    <property type="term" value="P:defense response to Gram-negative bacterium"/>
    <property type="evidence" value="ECO:0007669"/>
    <property type="project" value="UniProtKB-ARBA"/>
</dbReference>
<dbReference type="GO" id="GO:0050830">
    <property type="term" value="P:defense response to Gram-positive bacterium"/>
    <property type="evidence" value="ECO:0007669"/>
    <property type="project" value="TreeGrafter"/>
</dbReference>
<dbReference type="GO" id="GO:0045087">
    <property type="term" value="P:innate immune response"/>
    <property type="evidence" value="ECO:0007669"/>
    <property type="project" value="UniProtKB-KW"/>
</dbReference>
<dbReference type="InterPro" id="IPR000875">
    <property type="entry name" value="Cecropin"/>
</dbReference>
<dbReference type="InterPro" id="IPR020400">
    <property type="entry name" value="Cecropin_insect"/>
</dbReference>
<dbReference type="PANTHER" id="PTHR38329">
    <property type="entry name" value="CECROPIN-A1-RELATED"/>
    <property type="match status" value="1"/>
</dbReference>
<dbReference type="PANTHER" id="PTHR38329:SF1">
    <property type="entry name" value="CECROPIN-A1-RELATED"/>
    <property type="match status" value="1"/>
</dbReference>
<dbReference type="Pfam" id="PF00272">
    <property type="entry name" value="Cecropin"/>
    <property type="match status" value="1"/>
</dbReference>
<dbReference type="PROSITE" id="PS00268">
    <property type="entry name" value="CECROPIN"/>
    <property type="match status" value="1"/>
</dbReference>
<proteinExistence type="evidence at transcript level"/>
<name>CECC_DROYA</name>
<sequence>MNFNKIFVFVALILAISLGQSEAGWLKKLGKRIERIGQHTRDATIQGLGIAQQAANVAATARG</sequence>
<comment type="function">
    <text>Cecropins have lytic and antibacterial activity against several Gram-positive and Gram-negative bacteria.</text>
</comment>
<comment type="subcellular location">
    <subcellularLocation>
        <location>Secreted</location>
    </subcellularLocation>
</comment>
<comment type="developmental stage">
    <text>Expressed during metamorphosis in pupae.</text>
</comment>
<comment type="similarity">
    <text evidence="2">Belongs to the cecropin family.</text>
</comment>
<accession>P84226</accession>
<accession>Q8WP47</accession>
<organism>
    <name type="scientific">Drosophila yakuba</name>
    <name type="common">Fruit fly</name>
    <dbReference type="NCBI Taxonomy" id="7245"/>
    <lineage>
        <taxon>Eukaryota</taxon>
        <taxon>Metazoa</taxon>
        <taxon>Ecdysozoa</taxon>
        <taxon>Arthropoda</taxon>
        <taxon>Hexapoda</taxon>
        <taxon>Insecta</taxon>
        <taxon>Pterygota</taxon>
        <taxon>Neoptera</taxon>
        <taxon>Endopterygota</taxon>
        <taxon>Diptera</taxon>
        <taxon>Brachycera</taxon>
        <taxon>Muscomorpha</taxon>
        <taxon>Ephydroidea</taxon>
        <taxon>Drosophilidae</taxon>
        <taxon>Drosophila</taxon>
        <taxon>Sophophora</taxon>
    </lineage>
</organism>
<gene>
    <name type="primary">CecC</name>
</gene>
<evidence type="ECO:0000250" key="1"/>
<evidence type="ECO:0000305" key="2"/>
<reference key="1">
    <citation type="journal article" date="2002" name="J. Mol. Evol.">
        <title>Rapid evolution of the male-specific antibacterial protein andropin gene in Drosophila.</title>
        <authorList>
            <person name="Date-Ito A."/>
            <person name="Kasahara K."/>
            <person name="Sawai H."/>
            <person name="Chigusa S.I."/>
        </authorList>
    </citation>
    <scope>NUCLEOTIDE SEQUENCE [GENOMIC DNA]</scope>
</reference>
<protein>
    <recommendedName>
        <fullName>Cecropin-C</fullName>
    </recommendedName>
</protein>